<evidence type="ECO:0000255" key="1">
    <source>
        <dbReference type="HAMAP-Rule" id="MF_00193"/>
    </source>
</evidence>
<sequence length="257" mass="29182">MKSNTEIYKNLKLLEDYGTYLIEWIKLKVQQANKKGVIVGISGGIDSALVACLAKKAFPENSLGITMPIGNSMKLDFDDIAKLQKLTKLEIINIDLTLSYDALAKTLDVKNKLAKANIKPRLRMASLYAMAQEKDYLVLGTDNLDEWYLGYFTKYGDGGVDLLPISYLTKSEVISLAQIYKVDKGIIEKKPSAGLWENQEDEKELGYSYSEVDLFLRKKQIDSQIATKIEKQHQMTEHKRQLASKPMDIVDFENKER</sequence>
<gene>
    <name evidence="1" type="primary">nadE</name>
    <name type="ordered locus">MYPU_6230</name>
</gene>
<keyword id="KW-0067">ATP-binding</keyword>
<keyword id="KW-0436">Ligase</keyword>
<keyword id="KW-0460">Magnesium</keyword>
<keyword id="KW-0479">Metal-binding</keyword>
<keyword id="KW-0520">NAD</keyword>
<keyword id="KW-0547">Nucleotide-binding</keyword>
<keyword id="KW-1185">Reference proteome</keyword>
<proteinExistence type="inferred from homology"/>
<dbReference type="EC" id="6.3.1.5" evidence="1"/>
<dbReference type="EMBL" id="AL445565">
    <property type="protein sequence ID" value="CAC13796.1"/>
    <property type="molecule type" value="Genomic_DNA"/>
</dbReference>
<dbReference type="PIR" id="G90589">
    <property type="entry name" value="G90589"/>
</dbReference>
<dbReference type="RefSeq" id="WP_010925424.1">
    <property type="nucleotide sequence ID" value="NC_002771.1"/>
</dbReference>
<dbReference type="SMR" id="Q98PU6"/>
<dbReference type="STRING" id="272635.gene:17577230"/>
<dbReference type="KEGG" id="mpu:MYPU_6230"/>
<dbReference type="eggNOG" id="COG0171">
    <property type="taxonomic scope" value="Bacteria"/>
</dbReference>
<dbReference type="HOGENOM" id="CLU_059327_1_1_14"/>
<dbReference type="BioCyc" id="MPUL272635:G1GT6-633-MONOMER"/>
<dbReference type="UniPathway" id="UPA00253">
    <property type="reaction ID" value="UER00333"/>
</dbReference>
<dbReference type="Proteomes" id="UP000000528">
    <property type="component" value="Chromosome"/>
</dbReference>
<dbReference type="GO" id="GO:0005737">
    <property type="term" value="C:cytoplasm"/>
    <property type="evidence" value="ECO:0007669"/>
    <property type="project" value="InterPro"/>
</dbReference>
<dbReference type="GO" id="GO:0005524">
    <property type="term" value="F:ATP binding"/>
    <property type="evidence" value="ECO:0007669"/>
    <property type="project" value="UniProtKB-UniRule"/>
</dbReference>
<dbReference type="GO" id="GO:0004359">
    <property type="term" value="F:glutaminase activity"/>
    <property type="evidence" value="ECO:0007669"/>
    <property type="project" value="InterPro"/>
</dbReference>
<dbReference type="GO" id="GO:0046872">
    <property type="term" value="F:metal ion binding"/>
    <property type="evidence" value="ECO:0007669"/>
    <property type="project" value="UniProtKB-KW"/>
</dbReference>
<dbReference type="GO" id="GO:0003952">
    <property type="term" value="F:NAD+ synthase (glutamine-hydrolyzing) activity"/>
    <property type="evidence" value="ECO:0007669"/>
    <property type="project" value="InterPro"/>
</dbReference>
<dbReference type="GO" id="GO:0008795">
    <property type="term" value="F:NAD+ synthase activity"/>
    <property type="evidence" value="ECO:0007669"/>
    <property type="project" value="UniProtKB-UniRule"/>
</dbReference>
<dbReference type="GO" id="GO:0009435">
    <property type="term" value="P:NAD biosynthetic process"/>
    <property type="evidence" value="ECO:0007669"/>
    <property type="project" value="UniProtKB-UniRule"/>
</dbReference>
<dbReference type="CDD" id="cd00553">
    <property type="entry name" value="NAD_synthase"/>
    <property type="match status" value="1"/>
</dbReference>
<dbReference type="Gene3D" id="3.40.50.620">
    <property type="entry name" value="HUPs"/>
    <property type="match status" value="1"/>
</dbReference>
<dbReference type="HAMAP" id="MF_00193">
    <property type="entry name" value="NadE_ammonia_dep"/>
    <property type="match status" value="1"/>
</dbReference>
<dbReference type="InterPro" id="IPR022310">
    <property type="entry name" value="NAD/GMP_synthase"/>
</dbReference>
<dbReference type="InterPro" id="IPR003694">
    <property type="entry name" value="NAD_synthase"/>
</dbReference>
<dbReference type="InterPro" id="IPR022926">
    <property type="entry name" value="NH(3)-dep_NAD(+)_synth"/>
</dbReference>
<dbReference type="InterPro" id="IPR014729">
    <property type="entry name" value="Rossmann-like_a/b/a_fold"/>
</dbReference>
<dbReference type="NCBIfam" id="TIGR00552">
    <property type="entry name" value="nadE"/>
    <property type="match status" value="1"/>
</dbReference>
<dbReference type="PANTHER" id="PTHR23090:SF9">
    <property type="entry name" value="GLUTAMINE-DEPENDENT NAD(+) SYNTHETASE"/>
    <property type="match status" value="1"/>
</dbReference>
<dbReference type="PANTHER" id="PTHR23090">
    <property type="entry name" value="NH 3 /GLUTAMINE-DEPENDENT NAD + SYNTHETASE"/>
    <property type="match status" value="1"/>
</dbReference>
<dbReference type="Pfam" id="PF02540">
    <property type="entry name" value="NAD_synthase"/>
    <property type="match status" value="1"/>
</dbReference>
<dbReference type="SUPFAM" id="SSF52402">
    <property type="entry name" value="Adenine nucleotide alpha hydrolases-like"/>
    <property type="match status" value="1"/>
</dbReference>
<organism>
    <name type="scientific">Mycoplasmopsis pulmonis (strain UAB CTIP)</name>
    <name type="common">Mycoplasma pulmonis</name>
    <dbReference type="NCBI Taxonomy" id="272635"/>
    <lineage>
        <taxon>Bacteria</taxon>
        <taxon>Bacillati</taxon>
        <taxon>Mycoplasmatota</taxon>
        <taxon>Mycoplasmoidales</taxon>
        <taxon>Metamycoplasmataceae</taxon>
        <taxon>Mycoplasmopsis</taxon>
    </lineage>
</organism>
<reference key="1">
    <citation type="journal article" date="2001" name="Nucleic Acids Res.">
        <title>The complete genome sequence of the murine respiratory pathogen Mycoplasma pulmonis.</title>
        <authorList>
            <person name="Chambaud I."/>
            <person name="Heilig R."/>
            <person name="Ferris S."/>
            <person name="Barbe V."/>
            <person name="Samson D."/>
            <person name="Galisson F."/>
            <person name="Moszer I."/>
            <person name="Dybvig K."/>
            <person name="Wroblewski H."/>
            <person name="Viari A."/>
            <person name="Rocha E.P.C."/>
            <person name="Blanchard A."/>
        </authorList>
    </citation>
    <scope>NUCLEOTIDE SEQUENCE [LARGE SCALE GENOMIC DNA]</scope>
    <source>
        <strain>UAB CTIP</strain>
    </source>
</reference>
<name>NADE_MYCPU</name>
<protein>
    <recommendedName>
        <fullName evidence="1">NH(3)-dependent NAD(+) synthetase</fullName>
        <ecNumber evidence="1">6.3.1.5</ecNumber>
    </recommendedName>
</protein>
<comment type="function">
    <text evidence="1">Catalyzes the ATP-dependent amidation of deamido-NAD to form NAD. Uses ammonia as a nitrogen source.</text>
</comment>
<comment type="catalytic activity">
    <reaction evidence="1">
        <text>deamido-NAD(+) + NH4(+) + ATP = AMP + diphosphate + NAD(+) + H(+)</text>
        <dbReference type="Rhea" id="RHEA:21188"/>
        <dbReference type="ChEBI" id="CHEBI:15378"/>
        <dbReference type="ChEBI" id="CHEBI:28938"/>
        <dbReference type="ChEBI" id="CHEBI:30616"/>
        <dbReference type="ChEBI" id="CHEBI:33019"/>
        <dbReference type="ChEBI" id="CHEBI:57540"/>
        <dbReference type="ChEBI" id="CHEBI:58437"/>
        <dbReference type="ChEBI" id="CHEBI:456215"/>
        <dbReference type="EC" id="6.3.1.5"/>
    </reaction>
</comment>
<comment type="pathway">
    <text evidence="1">Cofactor biosynthesis; NAD(+) biosynthesis; NAD(+) from deamido-NAD(+) (ammonia route): step 1/1.</text>
</comment>
<comment type="subunit">
    <text evidence="1">Homodimer.</text>
</comment>
<comment type="similarity">
    <text evidence="1">Belongs to the NAD synthetase family.</text>
</comment>
<accession>Q98PU6</accession>
<feature type="chain" id="PRO_0000152183" description="NH(3)-dependent NAD(+) synthetase">
    <location>
        <begin position="1"/>
        <end position="257"/>
    </location>
</feature>
<feature type="binding site" evidence="1">
    <location>
        <begin position="40"/>
        <end position="47"/>
    </location>
    <ligand>
        <name>ATP</name>
        <dbReference type="ChEBI" id="CHEBI:30616"/>
    </ligand>
</feature>
<feature type="binding site" evidence="1">
    <location>
        <position position="46"/>
    </location>
    <ligand>
        <name>Mg(2+)</name>
        <dbReference type="ChEBI" id="CHEBI:18420"/>
    </ligand>
</feature>
<feature type="binding site" evidence="1">
    <location>
        <position position="121"/>
    </location>
    <ligand>
        <name>deamido-NAD(+)</name>
        <dbReference type="ChEBI" id="CHEBI:58437"/>
    </ligand>
</feature>
<feature type="binding site" evidence="1">
    <location>
        <position position="141"/>
    </location>
    <ligand>
        <name>ATP</name>
        <dbReference type="ChEBI" id="CHEBI:30616"/>
    </ligand>
</feature>
<feature type="binding site" evidence="1">
    <location>
        <position position="146"/>
    </location>
    <ligand>
        <name>Mg(2+)</name>
        <dbReference type="ChEBI" id="CHEBI:18420"/>
    </ligand>
</feature>
<feature type="binding site" evidence="1">
    <location>
        <position position="154"/>
    </location>
    <ligand>
        <name>deamido-NAD(+)</name>
        <dbReference type="ChEBI" id="CHEBI:58437"/>
    </ligand>
</feature>
<feature type="binding site" evidence="1">
    <location>
        <position position="161"/>
    </location>
    <ligand>
        <name>deamido-NAD(+)</name>
        <dbReference type="ChEBI" id="CHEBI:58437"/>
    </ligand>
</feature>
<feature type="binding site" evidence="1">
    <location>
        <position position="170"/>
    </location>
    <ligand>
        <name>ATP</name>
        <dbReference type="ChEBI" id="CHEBI:30616"/>
    </ligand>
</feature>
<feature type="binding site" evidence="1">
    <location>
        <position position="192"/>
    </location>
    <ligand>
        <name>ATP</name>
        <dbReference type="ChEBI" id="CHEBI:30616"/>
    </ligand>
</feature>
<feature type="binding site" evidence="1">
    <location>
        <begin position="238"/>
        <end position="239"/>
    </location>
    <ligand>
        <name>deamido-NAD(+)</name>
        <dbReference type="ChEBI" id="CHEBI:58437"/>
    </ligand>
</feature>